<organismHost>
    <name type="scientific">Oryctolagus cuniculus</name>
    <name type="common">Rabbit</name>
    <dbReference type="NCBI Taxonomy" id="9986"/>
</organismHost>
<protein>
    <recommendedName>
        <fullName>Probable host range protein 2-2</fullName>
    </recommendedName>
</protein>
<organism>
    <name type="scientific">Rabbit fibroma virus (strain Kasza)</name>
    <name type="common">RFV</name>
    <name type="synonym">Shope fibroma virus (strain Kasza)</name>
    <dbReference type="NCBI Taxonomy" id="10272"/>
    <lineage>
        <taxon>Viruses</taxon>
        <taxon>Varidnaviria</taxon>
        <taxon>Bamfordvirae</taxon>
        <taxon>Nucleocytoviricota</taxon>
        <taxon>Pokkesviricetes</taxon>
        <taxon>Chitovirales</taxon>
        <taxon>Poxviridae</taxon>
        <taxon>Chordopoxvirinae</taxon>
        <taxon>Leporipoxvirus</taxon>
        <taxon>Rabbit fibroma virus</taxon>
    </lineage>
</organism>
<keyword id="KW-1185">Reference proteome</keyword>
<reference key="1">
    <citation type="journal article" date="1999" name="Virology">
        <title>The complete genome sequence of shope (Rabbit) fibroma virus.</title>
        <authorList>
            <person name="Willer D.O."/>
            <person name="McFadden G."/>
            <person name="Evans D.H."/>
        </authorList>
    </citation>
    <scope>NUCLEOTIDE SEQUENCE [LARGE SCALE GENOMIC DNA]</scope>
</reference>
<sequence>MTITMIDMEVYLVDENLSIKNAGLSHGYSCGCILKLDITSPKKVKMLVITKVTSFQAIQELKPLNAKLNGSDLDTELVKCYNTTTDLTVYKTSAYHRDMPDKEYCVTRIYSVMANIDSKSTIEFYGTTSDEFLSAYPVIYINPEEKYYKVKNKGRLQMRVITPILNSDKLQFMAKGDMYAGVGDDPSIVDSSDSDEETDYDY</sequence>
<proteinExistence type="inferred from homology"/>
<accession>Q9Q908</accession>
<dbReference type="EMBL" id="AF170722">
    <property type="protein sequence ID" value="AAF17945.1"/>
    <property type="molecule type" value="Genomic_DNA"/>
</dbReference>
<dbReference type="RefSeq" id="NP_051952.1">
    <property type="nucleotide sequence ID" value="NC_001266.1"/>
</dbReference>
<dbReference type="SMR" id="Q9Q908"/>
<dbReference type="KEGG" id="vg:1486906"/>
<dbReference type="Proteomes" id="UP000000868">
    <property type="component" value="Segment"/>
</dbReference>
<dbReference type="GO" id="GO:0016032">
    <property type="term" value="P:viral process"/>
    <property type="evidence" value="ECO:0007669"/>
    <property type="project" value="InterPro"/>
</dbReference>
<dbReference type="InterPro" id="IPR004967">
    <property type="entry name" value="Poxvirus_C7/F8A"/>
</dbReference>
<dbReference type="Pfam" id="PF03287">
    <property type="entry name" value="Pox_C7_F8A"/>
    <property type="match status" value="1"/>
</dbReference>
<dbReference type="PIRSF" id="PIRSF003779">
    <property type="entry name" value="VAC_C7L"/>
    <property type="match status" value="1"/>
</dbReference>
<gene>
    <name type="ordered locus">s063R</name>
</gene>
<feature type="chain" id="PRO_0000099401" description="Probable host range protein 2-2">
    <location>
        <begin position="1"/>
        <end position="202"/>
    </location>
</feature>
<evidence type="ECO:0000250" key="1"/>
<evidence type="ECO:0000305" key="2"/>
<comment type="function">
    <text evidence="1">Plays a role for multiplication of the virus in different cell types.</text>
</comment>
<comment type="similarity">
    <text evidence="2">Belongs to the poxviridae C7 protein family.</text>
</comment>
<name>VH22_RFVKA</name>